<proteinExistence type="inferred from homology"/>
<evidence type="ECO:0000250" key="1">
    <source>
        <dbReference type="UniProtKB" id="Q04571"/>
    </source>
</evidence>
<evidence type="ECO:0000255" key="2"/>
<evidence type="ECO:0000303" key="3">
    <source>
    </source>
</evidence>
<evidence type="ECO:0000305" key="4"/>
<evidence type="ECO:0000305" key="5">
    <source>
    </source>
</evidence>
<evidence type="ECO:0000312" key="6">
    <source>
        <dbReference type="EMBL" id="KDQ22994.1"/>
    </source>
</evidence>
<organism>
    <name type="scientific">Pleurotus ostreatus (strain PC15)</name>
    <name type="common">Oyster mushroom</name>
    <dbReference type="NCBI Taxonomy" id="1137138"/>
    <lineage>
        <taxon>Eukaryota</taxon>
        <taxon>Fungi</taxon>
        <taxon>Dikarya</taxon>
        <taxon>Basidiomycota</taxon>
        <taxon>Agaricomycotina</taxon>
        <taxon>Agaricomycetes</taxon>
        <taxon>Agaricomycetidae</taxon>
        <taxon>Agaricales</taxon>
        <taxon>Pleurotineae</taxon>
        <taxon>Pleurotaceae</taxon>
        <taxon>Pleurotus</taxon>
    </lineage>
</organism>
<gene>
    <name evidence="3" type="primary">Hydph5</name>
    <name evidence="6" type="ORF">PLEOSDRAFT_163865</name>
</gene>
<name>HYD5_PLEO1</name>
<comment type="function">
    <text evidence="4">Aerial growth, conidiation, and dispersal of filamentous fungi in the environment rely upon a capability of their secreting small amphipathic proteins called hydrophobins (HPBs) with low sequence identity. Class I can self-assemble into an outermost layer of rodlet bundles on aerial cell surfaces, conferring cellular hydrophobicity that supports fungal growth, development and dispersal; whereas Class II form highly ordered films at water-air interfaces through intermolecular interactions but contribute nothing to the rodlet structure.</text>
</comment>
<comment type="subunit">
    <text evidence="1">Self-assembles to form functional amyloid fibrils called rodlets. Self-assembly into fibrillar rodlets occurs spontaneously at hydrophobic:hydrophilic interfaces and the rodlets further associate laterally to form amphipathic monolayers.</text>
</comment>
<comment type="subcellular location">
    <subcellularLocation>
        <location evidence="5">Secreted</location>
    </subcellularLocation>
    <subcellularLocation>
        <location evidence="5">Secreted</location>
        <location evidence="5">Cell wall</location>
    </subcellularLocation>
</comment>
<comment type="similarity">
    <text evidence="4">Belongs to the fungal hydrophobin family.</text>
</comment>
<keyword id="KW-0134">Cell wall</keyword>
<keyword id="KW-1015">Disulfide bond</keyword>
<keyword id="KW-1185">Reference proteome</keyword>
<keyword id="KW-0964">Secreted</keyword>
<keyword id="KW-0732">Signal</keyword>
<feature type="signal peptide" evidence="2">
    <location>
        <begin position="1"/>
        <end position="24"/>
    </location>
</feature>
<feature type="chain" id="PRO_5013986567" description="Unclassified hydrophobin 5">
    <location>
        <begin position="25"/>
        <end position="127"/>
    </location>
</feature>
<feature type="disulfide bond" evidence="1">
    <location>
        <begin position="39"/>
        <end position="107"/>
    </location>
</feature>
<feature type="disulfide bond" evidence="1">
    <location>
        <begin position="46"/>
        <end position="101"/>
    </location>
</feature>
<feature type="disulfide bond" evidence="1">
    <location>
        <begin position="47"/>
        <end position="92"/>
    </location>
</feature>
<feature type="disulfide bond" evidence="1">
    <location>
        <begin position="108"/>
        <end position="121"/>
    </location>
</feature>
<sequence length="127" mass="12952">MFNKQTNAIVLLFTFALFATLAVATPTIVARTGGSGSSCPTTDIKCCSHVGTFSEVQGYIDDDTKVKLIPALLGLLGATIDVVLGVVLGVTCSSISVGSSCSATTVCCENVVFNGLINVGCTAIDIL</sequence>
<protein>
    <recommendedName>
        <fullName evidence="3">Unclassified hydrophobin 5</fullName>
    </recommendedName>
</protein>
<accession>A0A067N582</accession>
<dbReference type="EMBL" id="KL198014">
    <property type="protein sequence ID" value="KDQ22994.1"/>
    <property type="molecule type" value="Genomic_DNA"/>
</dbReference>
<dbReference type="STRING" id="1137138.A0A067N582"/>
<dbReference type="VEuPathDB" id="FungiDB:PLEOSDRAFT_163865"/>
<dbReference type="HOGENOM" id="CLU_105134_3_1_1"/>
<dbReference type="InParanoid" id="A0A067N582"/>
<dbReference type="OrthoDB" id="277950at5338"/>
<dbReference type="Proteomes" id="UP000027073">
    <property type="component" value="Unassembled WGS sequence"/>
</dbReference>
<dbReference type="GO" id="GO:0005576">
    <property type="term" value="C:extracellular region"/>
    <property type="evidence" value="ECO:0007669"/>
    <property type="project" value="UniProtKB-KW"/>
</dbReference>
<dbReference type="GO" id="GO:0009277">
    <property type="term" value="C:fungal-type cell wall"/>
    <property type="evidence" value="ECO:0007669"/>
    <property type="project" value="InterPro"/>
</dbReference>
<dbReference type="GO" id="GO:0005199">
    <property type="term" value="F:structural constituent of cell wall"/>
    <property type="evidence" value="ECO:0007669"/>
    <property type="project" value="InterPro"/>
</dbReference>
<dbReference type="CDD" id="cd23507">
    <property type="entry name" value="hydrophobin_I"/>
    <property type="match status" value="1"/>
</dbReference>
<dbReference type="InterPro" id="IPR001338">
    <property type="entry name" value="Hydrophobin"/>
</dbReference>
<dbReference type="InterPro" id="IPR019778">
    <property type="entry name" value="Hydrophobin_CS"/>
</dbReference>
<dbReference type="Pfam" id="PF01185">
    <property type="entry name" value="Hydrophobin"/>
    <property type="match status" value="1"/>
</dbReference>
<dbReference type="SMART" id="SM00075">
    <property type="entry name" value="HYDRO"/>
    <property type="match status" value="1"/>
</dbReference>
<dbReference type="PROSITE" id="PS00956">
    <property type="entry name" value="HYDROPHOBIN"/>
    <property type="match status" value="1"/>
</dbReference>
<reference key="1">
    <citation type="journal article" date="2014" name="Proc. Natl. Acad. Sci. U.S.A.">
        <title>Extensive sampling of basidiomycete genomes demonstrates inadequacy of the white-rot/brown-rot paradigm for wood decay fungi.</title>
        <authorList>
            <person name="Riley R."/>
            <person name="Salamov A.A."/>
            <person name="Brown D.W."/>
            <person name="Nagy L.G."/>
            <person name="Floudas D."/>
            <person name="Held B.W."/>
            <person name="Levasseur A."/>
            <person name="Lombard V."/>
            <person name="Morin E."/>
            <person name="Otillar R."/>
            <person name="Lindquist E.A."/>
            <person name="Sun H."/>
            <person name="LaButti K.M."/>
            <person name="Schmutz J."/>
            <person name="Jabbour D."/>
            <person name="Luo H."/>
            <person name="Baker S.E."/>
            <person name="Pisabarro A.G."/>
            <person name="Walton J.D."/>
            <person name="Blanchette R.A."/>
            <person name="Henrissat B."/>
            <person name="Martin F."/>
            <person name="Cullen D."/>
            <person name="Hibbett D.S."/>
            <person name="Grigoriev I.V."/>
        </authorList>
    </citation>
    <scope>NUCLEOTIDE SEQUENCE [LARGE SCALE GENOMIC DNA]</scope>
    <source>
        <strain>PC15</strain>
    </source>
</reference>
<reference key="2">
    <citation type="journal article" date="2021" name="Microbiol. Res.">
        <title>Identification of hydrophobin genes and their physiological functions related to growth and development in Pleurotus ostreatus.</title>
        <authorList>
            <person name="Xu D."/>
            <person name="Wang Y."/>
            <person name="Keerio A.A."/>
            <person name="Ma A."/>
        </authorList>
    </citation>
    <scope>IDENTIFICATION</scope>
</reference>